<keyword id="KW-0963">Cytoplasm</keyword>
<keyword id="KW-0413">Isomerase</keyword>
<keyword id="KW-0464">Manganese</keyword>
<keyword id="KW-0479">Metal-binding</keyword>
<keyword id="KW-1185">Reference proteome</keyword>
<comment type="function">
    <text evidence="1">Isomerase that catalyzes the conversion of deoxy-ribose 1-phosphate (dRib-1-P) and ribose 1-phosphate (Rib-1-P) to deoxy-ribose 5-phosphate (dRib-5-P) and ribose 5-phosphate (Rib-5-P), respectively.</text>
</comment>
<comment type="catalytic activity">
    <reaction evidence="1">
        <text>2-deoxy-alpha-D-ribose 1-phosphate = 2-deoxy-D-ribose 5-phosphate</text>
        <dbReference type="Rhea" id="RHEA:27658"/>
        <dbReference type="ChEBI" id="CHEBI:57259"/>
        <dbReference type="ChEBI" id="CHEBI:62877"/>
        <dbReference type="EC" id="5.4.2.7"/>
    </reaction>
</comment>
<comment type="catalytic activity">
    <reaction evidence="1">
        <text>alpha-D-ribose 1-phosphate = D-ribose 5-phosphate</text>
        <dbReference type="Rhea" id="RHEA:18793"/>
        <dbReference type="ChEBI" id="CHEBI:57720"/>
        <dbReference type="ChEBI" id="CHEBI:78346"/>
        <dbReference type="EC" id="5.4.2.7"/>
    </reaction>
</comment>
<comment type="cofactor">
    <cofactor evidence="1">
        <name>Mn(2+)</name>
        <dbReference type="ChEBI" id="CHEBI:29035"/>
    </cofactor>
    <text evidence="1">Binds 2 manganese ions.</text>
</comment>
<comment type="pathway">
    <text evidence="1">Carbohydrate degradation; 2-deoxy-D-ribose 1-phosphate degradation; D-glyceraldehyde 3-phosphate and acetaldehyde from 2-deoxy-alpha-D-ribose 1-phosphate: step 1/2.</text>
</comment>
<comment type="subcellular location">
    <subcellularLocation>
        <location evidence="1">Cytoplasm</location>
    </subcellularLocation>
</comment>
<comment type="similarity">
    <text evidence="1">Belongs to the phosphopentomutase family.</text>
</comment>
<dbReference type="EC" id="5.4.2.7" evidence="1"/>
<dbReference type="EMBL" id="CP000023">
    <property type="protein sequence ID" value="AAV60759.1"/>
    <property type="molecule type" value="Genomic_DNA"/>
</dbReference>
<dbReference type="RefSeq" id="WP_002948787.1">
    <property type="nucleotide sequence ID" value="NC_006448.1"/>
</dbReference>
<dbReference type="SMR" id="Q5M482"/>
<dbReference type="STRING" id="264199.stu1120"/>
<dbReference type="KEGG" id="stl:stu1120"/>
<dbReference type="eggNOG" id="COG1015">
    <property type="taxonomic scope" value="Bacteria"/>
</dbReference>
<dbReference type="HOGENOM" id="CLU_053861_0_0_9"/>
<dbReference type="UniPathway" id="UPA00002">
    <property type="reaction ID" value="UER00467"/>
</dbReference>
<dbReference type="Proteomes" id="UP000001170">
    <property type="component" value="Chromosome"/>
</dbReference>
<dbReference type="GO" id="GO:0005829">
    <property type="term" value="C:cytosol"/>
    <property type="evidence" value="ECO:0007669"/>
    <property type="project" value="TreeGrafter"/>
</dbReference>
<dbReference type="GO" id="GO:0000287">
    <property type="term" value="F:magnesium ion binding"/>
    <property type="evidence" value="ECO:0007669"/>
    <property type="project" value="InterPro"/>
</dbReference>
<dbReference type="GO" id="GO:0030145">
    <property type="term" value="F:manganese ion binding"/>
    <property type="evidence" value="ECO:0007669"/>
    <property type="project" value="UniProtKB-UniRule"/>
</dbReference>
<dbReference type="GO" id="GO:0008973">
    <property type="term" value="F:phosphopentomutase activity"/>
    <property type="evidence" value="ECO:0007669"/>
    <property type="project" value="UniProtKB-UniRule"/>
</dbReference>
<dbReference type="GO" id="GO:0006018">
    <property type="term" value="P:2-deoxyribose 1-phosphate catabolic process"/>
    <property type="evidence" value="ECO:0007669"/>
    <property type="project" value="UniProtKB-UniRule"/>
</dbReference>
<dbReference type="GO" id="GO:0006015">
    <property type="term" value="P:5-phosphoribose 1-diphosphate biosynthetic process"/>
    <property type="evidence" value="ECO:0007669"/>
    <property type="project" value="UniProtKB-UniPathway"/>
</dbReference>
<dbReference type="GO" id="GO:0043094">
    <property type="term" value="P:metabolic compound salvage"/>
    <property type="evidence" value="ECO:0007669"/>
    <property type="project" value="InterPro"/>
</dbReference>
<dbReference type="GO" id="GO:0009117">
    <property type="term" value="P:nucleotide metabolic process"/>
    <property type="evidence" value="ECO:0007669"/>
    <property type="project" value="InterPro"/>
</dbReference>
<dbReference type="CDD" id="cd16009">
    <property type="entry name" value="PPM"/>
    <property type="match status" value="1"/>
</dbReference>
<dbReference type="FunFam" id="3.30.70.1250:FF:000001">
    <property type="entry name" value="Phosphopentomutase"/>
    <property type="match status" value="1"/>
</dbReference>
<dbReference type="Gene3D" id="3.40.720.10">
    <property type="entry name" value="Alkaline Phosphatase, subunit A"/>
    <property type="match status" value="1"/>
</dbReference>
<dbReference type="Gene3D" id="3.30.70.1250">
    <property type="entry name" value="Phosphopentomutase"/>
    <property type="match status" value="1"/>
</dbReference>
<dbReference type="HAMAP" id="MF_00740">
    <property type="entry name" value="Phosphopentomut"/>
    <property type="match status" value="1"/>
</dbReference>
<dbReference type="InterPro" id="IPR017850">
    <property type="entry name" value="Alkaline_phosphatase_core_sf"/>
</dbReference>
<dbReference type="InterPro" id="IPR010045">
    <property type="entry name" value="DeoB"/>
</dbReference>
<dbReference type="InterPro" id="IPR006124">
    <property type="entry name" value="Metalloenzyme"/>
</dbReference>
<dbReference type="InterPro" id="IPR024052">
    <property type="entry name" value="Phosphopentomutase_DeoB_cap_sf"/>
</dbReference>
<dbReference type="NCBIfam" id="TIGR01696">
    <property type="entry name" value="deoB"/>
    <property type="match status" value="1"/>
</dbReference>
<dbReference type="NCBIfam" id="NF003766">
    <property type="entry name" value="PRK05362.1"/>
    <property type="match status" value="1"/>
</dbReference>
<dbReference type="PANTHER" id="PTHR21110">
    <property type="entry name" value="PHOSPHOPENTOMUTASE"/>
    <property type="match status" value="1"/>
</dbReference>
<dbReference type="PANTHER" id="PTHR21110:SF0">
    <property type="entry name" value="PHOSPHOPENTOMUTASE"/>
    <property type="match status" value="1"/>
</dbReference>
<dbReference type="Pfam" id="PF01676">
    <property type="entry name" value="Metalloenzyme"/>
    <property type="match status" value="1"/>
</dbReference>
<dbReference type="PIRSF" id="PIRSF001491">
    <property type="entry name" value="Ppentomutase"/>
    <property type="match status" value="1"/>
</dbReference>
<dbReference type="SUPFAM" id="SSF53649">
    <property type="entry name" value="Alkaline phosphatase-like"/>
    <property type="match status" value="1"/>
</dbReference>
<dbReference type="SUPFAM" id="SSF143856">
    <property type="entry name" value="DeoB insert domain-like"/>
    <property type="match status" value="1"/>
</dbReference>
<reference key="1">
    <citation type="journal article" date="2004" name="Nat. Biotechnol.">
        <title>Complete sequence and comparative genome analysis of the dairy bacterium Streptococcus thermophilus.</title>
        <authorList>
            <person name="Bolotin A."/>
            <person name="Quinquis B."/>
            <person name="Renault P."/>
            <person name="Sorokin A."/>
            <person name="Ehrlich S.D."/>
            <person name="Kulakauskas S."/>
            <person name="Lapidus A."/>
            <person name="Goltsman E."/>
            <person name="Mazur M."/>
            <person name="Pusch G.D."/>
            <person name="Fonstein M."/>
            <person name="Overbeek R."/>
            <person name="Kyprides N."/>
            <person name="Purnelle B."/>
            <person name="Prozzi D."/>
            <person name="Ngui K."/>
            <person name="Masuy D."/>
            <person name="Hancy F."/>
            <person name="Burteau S."/>
            <person name="Boutry M."/>
            <person name="Delcour J."/>
            <person name="Goffeau A."/>
            <person name="Hols P."/>
        </authorList>
    </citation>
    <scope>NUCLEOTIDE SEQUENCE [LARGE SCALE GENOMIC DNA]</scope>
    <source>
        <strain>ATCC BAA-250 / LMG 18311</strain>
    </source>
</reference>
<sequence>MSKFNRMHLIVLDSVGIGAAPDANNFVNAGVPDGASDTLGHISKTVGLNVPNMAKLGLGNIPREQPLKTVPAESNPTGYATKLEEVSLGKDTMTGHWEIMGLNITEPFDTFWNGFPEEILTQIEEFSGRKVIREANKPYSGTAVIDDFGPRQMETGELIIYTSADPVLQIAAHEDIIPVEELYRICEFARSITLERPALLGRIIARPYVGEPGNFTRTSNRRDLAISPFAPTVLDKLNEAGIDTYSVGKISDIFNGEGINHDMGHNKSNNHGVDNLIKAMTSEDFKHGFSFTNLVDFDALYGHRRNPQGYRDCLHEFDERLPEIIAAMKEDDLLMITADHGNDPTYAGTDHTREYIPFLAYSPSFKCSGLIPVGHFADISATIADNFGVEKAMIGESFLDKLV</sequence>
<accession>Q5M482</accession>
<organism>
    <name type="scientific">Streptococcus thermophilus (strain ATCC BAA-250 / LMG 18311)</name>
    <dbReference type="NCBI Taxonomy" id="264199"/>
    <lineage>
        <taxon>Bacteria</taxon>
        <taxon>Bacillati</taxon>
        <taxon>Bacillota</taxon>
        <taxon>Bacilli</taxon>
        <taxon>Lactobacillales</taxon>
        <taxon>Streptococcaceae</taxon>
        <taxon>Streptococcus</taxon>
    </lineage>
</organism>
<name>DEOB_STRT2</name>
<gene>
    <name evidence="1" type="primary">deoB</name>
    <name type="ordered locus">stu1120</name>
</gene>
<proteinExistence type="inferred from homology"/>
<evidence type="ECO:0000255" key="1">
    <source>
        <dbReference type="HAMAP-Rule" id="MF_00740"/>
    </source>
</evidence>
<protein>
    <recommendedName>
        <fullName evidence="1">Phosphopentomutase</fullName>
        <ecNumber evidence="1">5.4.2.7</ecNumber>
    </recommendedName>
    <alternativeName>
        <fullName evidence="1">Phosphodeoxyribomutase</fullName>
    </alternativeName>
</protein>
<feature type="chain" id="PRO_0000258317" description="Phosphopentomutase">
    <location>
        <begin position="1"/>
        <end position="403"/>
    </location>
</feature>
<feature type="binding site" evidence="1">
    <location>
        <position position="13"/>
    </location>
    <ligand>
        <name>Mn(2+)</name>
        <dbReference type="ChEBI" id="CHEBI:29035"/>
        <label>1</label>
    </ligand>
</feature>
<feature type="binding site" evidence="1">
    <location>
        <position position="298"/>
    </location>
    <ligand>
        <name>Mn(2+)</name>
        <dbReference type="ChEBI" id="CHEBI:29035"/>
        <label>2</label>
    </ligand>
</feature>
<feature type="binding site" evidence="1">
    <location>
        <position position="303"/>
    </location>
    <ligand>
        <name>Mn(2+)</name>
        <dbReference type="ChEBI" id="CHEBI:29035"/>
        <label>2</label>
    </ligand>
</feature>
<feature type="binding site" evidence="1">
    <location>
        <position position="339"/>
    </location>
    <ligand>
        <name>Mn(2+)</name>
        <dbReference type="ChEBI" id="CHEBI:29035"/>
        <label>1</label>
    </ligand>
</feature>
<feature type="binding site" evidence="1">
    <location>
        <position position="340"/>
    </location>
    <ligand>
        <name>Mn(2+)</name>
        <dbReference type="ChEBI" id="CHEBI:29035"/>
        <label>1</label>
    </ligand>
</feature>
<feature type="binding site" evidence="1">
    <location>
        <position position="351"/>
    </location>
    <ligand>
        <name>Mn(2+)</name>
        <dbReference type="ChEBI" id="CHEBI:29035"/>
        <label>2</label>
    </ligand>
</feature>